<proteinExistence type="inferred from homology"/>
<comment type="function">
    <text evidence="1">Required for disulfide bond formation in some proteins.</text>
</comment>
<comment type="subcellular location">
    <subcellularLocation>
        <location evidence="1">Cell inner membrane</location>
        <topology evidence="1">Multi-pass membrane protein</topology>
    </subcellularLocation>
</comment>
<comment type="similarity">
    <text evidence="1">Belongs to the DsbB family. BdbC subfamily.</text>
</comment>
<name>BDBC_CHLMU</name>
<evidence type="ECO:0000255" key="1">
    <source>
        <dbReference type="HAMAP-Rule" id="MF_00287"/>
    </source>
</evidence>
<dbReference type="EMBL" id="AE002160">
    <property type="protein sequence ID" value="AAF39302.1"/>
    <property type="molecule type" value="Genomic_DNA"/>
</dbReference>
<dbReference type="PIR" id="B81702">
    <property type="entry name" value="B81702"/>
</dbReference>
<dbReference type="RefSeq" id="WP_010230476.1">
    <property type="nucleotide sequence ID" value="NZ_CP063055.1"/>
</dbReference>
<dbReference type="GeneID" id="1245801"/>
<dbReference type="KEGG" id="cmu:TC_0448"/>
<dbReference type="eggNOG" id="COG1495">
    <property type="taxonomic scope" value="Bacteria"/>
</dbReference>
<dbReference type="HOGENOM" id="CLU_128688_0_0_0"/>
<dbReference type="OrthoDB" id="158402at2"/>
<dbReference type="Proteomes" id="UP000000800">
    <property type="component" value="Chromosome"/>
</dbReference>
<dbReference type="GO" id="GO:0005886">
    <property type="term" value="C:plasma membrane"/>
    <property type="evidence" value="ECO:0007669"/>
    <property type="project" value="UniProtKB-SubCell"/>
</dbReference>
<dbReference type="GO" id="GO:0015035">
    <property type="term" value="F:protein-disulfide reductase activity"/>
    <property type="evidence" value="ECO:0007669"/>
    <property type="project" value="UniProtKB-UniRule"/>
</dbReference>
<dbReference type="GO" id="GO:0006457">
    <property type="term" value="P:protein folding"/>
    <property type="evidence" value="ECO:0007669"/>
    <property type="project" value="InterPro"/>
</dbReference>
<dbReference type="Gene3D" id="1.20.1550.10">
    <property type="entry name" value="DsbB-like"/>
    <property type="match status" value="1"/>
</dbReference>
<dbReference type="HAMAP" id="MF_00287">
    <property type="entry name" value="BdbC"/>
    <property type="match status" value="1"/>
</dbReference>
<dbReference type="InterPro" id="IPR003752">
    <property type="entry name" value="DiS_bond_form_DsbB/BdbC"/>
</dbReference>
<dbReference type="InterPro" id="IPR012187">
    <property type="entry name" value="Disulphide_bond_form_BdbC"/>
</dbReference>
<dbReference type="InterPro" id="IPR023380">
    <property type="entry name" value="DsbB-like_sf"/>
</dbReference>
<dbReference type="NCBIfam" id="NF001863">
    <property type="entry name" value="PRK00611.1"/>
    <property type="match status" value="1"/>
</dbReference>
<dbReference type="PANTHER" id="PTHR43469">
    <property type="entry name" value="DISULFIDE FORMATION PROTEIN-RELATED"/>
    <property type="match status" value="1"/>
</dbReference>
<dbReference type="PANTHER" id="PTHR43469:SF1">
    <property type="entry name" value="SPBETA PROPHAGE-DERIVED DISULFIDE BOND FORMATION PROTEIN B"/>
    <property type="match status" value="1"/>
</dbReference>
<dbReference type="Pfam" id="PF02600">
    <property type="entry name" value="DsbB"/>
    <property type="match status" value="1"/>
</dbReference>
<dbReference type="PIRSF" id="PIRSF036659">
    <property type="entry name" value="BdbC"/>
    <property type="match status" value="1"/>
</dbReference>
<dbReference type="SUPFAM" id="SSF158442">
    <property type="entry name" value="DsbB-like"/>
    <property type="match status" value="1"/>
</dbReference>
<gene>
    <name type="ordered locus">TC_0448</name>
</gene>
<reference key="1">
    <citation type="journal article" date="2000" name="Nucleic Acids Res.">
        <title>Genome sequences of Chlamydia trachomatis MoPn and Chlamydia pneumoniae AR39.</title>
        <authorList>
            <person name="Read T.D."/>
            <person name="Brunham R.C."/>
            <person name="Shen C."/>
            <person name="Gill S.R."/>
            <person name="Heidelberg J.F."/>
            <person name="White O."/>
            <person name="Hickey E.K."/>
            <person name="Peterson J.D."/>
            <person name="Utterback T.R."/>
            <person name="Berry K.J."/>
            <person name="Bass S."/>
            <person name="Linher K.D."/>
            <person name="Weidman J.F."/>
            <person name="Khouri H.M."/>
            <person name="Craven B."/>
            <person name="Bowman C."/>
            <person name="Dodson R.J."/>
            <person name="Gwinn M.L."/>
            <person name="Nelson W.C."/>
            <person name="DeBoy R.T."/>
            <person name="Kolonay J.F."/>
            <person name="McClarty G."/>
            <person name="Salzberg S.L."/>
            <person name="Eisen J.A."/>
            <person name="Fraser C.M."/>
        </authorList>
    </citation>
    <scope>NUCLEOTIDE SEQUENCE [LARGE SCALE GENOMIC DNA]</scope>
    <source>
        <strain>MoPn / Nigg</strain>
    </source>
</reference>
<sequence>MIKLLRSYCLYFAWLVSCIGTLMSVYYSYLLNVEPCVLCYYQRICLFPLVVILGISAYLDDLSVKIYALPLALIGFCIAIYQVCLQEIPGMTLDICGKVSCSTKLFLLGFITMPMASALAFFAIANLLIFATKSE</sequence>
<accession>Q9PKL7</accession>
<organism>
    <name type="scientific">Chlamydia muridarum (strain MoPn / Nigg)</name>
    <dbReference type="NCBI Taxonomy" id="243161"/>
    <lineage>
        <taxon>Bacteria</taxon>
        <taxon>Pseudomonadati</taxon>
        <taxon>Chlamydiota</taxon>
        <taxon>Chlamydiia</taxon>
        <taxon>Chlamydiales</taxon>
        <taxon>Chlamydiaceae</taxon>
        <taxon>Chlamydia/Chlamydophila group</taxon>
        <taxon>Chlamydia</taxon>
    </lineage>
</organism>
<keyword id="KW-0997">Cell inner membrane</keyword>
<keyword id="KW-1003">Cell membrane</keyword>
<keyword id="KW-0143">Chaperone</keyword>
<keyword id="KW-1015">Disulfide bond</keyword>
<keyword id="KW-0249">Electron transport</keyword>
<keyword id="KW-0472">Membrane</keyword>
<keyword id="KW-0560">Oxidoreductase</keyword>
<keyword id="KW-0676">Redox-active center</keyword>
<keyword id="KW-0812">Transmembrane</keyword>
<keyword id="KW-1133">Transmembrane helix</keyword>
<keyword id="KW-0813">Transport</keyword>
<protein>
    <recommendedName>
        <fullName evidence="1">Probable disulfide formation protein</fullName>
    </recommendedName>
    <alternativeName>
        <fullName evidence="1">Disulfide oxidoreductase</fullName>
    </alternativeName>
    <alternativeName>
        <fullName evidence="1">Thiol-disulfide oxidoreductase</fullName>
    </alternativeName>
</protein>
<feature type="chain" id="PRO_0000059380" description="Probable disulfide formation protein">
    <location>
        <begin position="1"/>
        <end position="135"/>
    </location>
</feature>
<feature type="transmembrane region" description="Helical" evidence="1">
    <location>
        <begin position="7"/>
        <end position="26"/>
    </location>
</feature>
<feature type="transmembrane region" description="Helical" evidence="1">
    <location>
        <begin position="41"/>
        <end position="60"/>
    </location>
</feature>
<feature type="transmembrane region" description="Helical" evidence="1">
    <location>
        <begin position="67"/>
        <end position="84"/>
    </location>
</feature>
<feature type="transmembrane region" description="Helical" evidence="1">
    <location>
        <begin position="109"/>
        <end position="131"/>
    </location>
</feature>
<feature type="disulfide bond" description="Redox-active" evidence="1">
    <location>
        <begin position="36"/>
        <end position="39"/>
    </location>
</feature>
<feature type="disulfide bond" description="Redox-active" evidence="1">
    <location>
        <begin position="96"/>
        <end position="101"/>
    </location>
</feature>